<feature type="chain" id="PRO_1000116164" description="Adenine phosphoribosyltransferase">
    <location>
        <begin position="1"/>
        <end position="170"/>
    </location>
</feature>
<gene>
    <name evidence="1" type="primary">apt</name>
    <name type="ordered locus">BCB4264_A4527</name>
</gene>
<reference key="1">
    <citation type="submission" date="2008-10" db="EMBL/GenBank/DDBJ databases">
        <title>Genome sequence of Bacillus cereus B4264.</title>
        <authorList>
            <person name="Dodson R.J."/>
            <person name="Durkin A.S."/>
            <person name="Rosovitz M.J."/>
            <person name="Rasko D.A."/>
            <person name="Hoffmaster A."/>
            <person name="Ravel J."/>
            <person name="Sutton G."/>
        </authorList>
    </citation>
    <scope>NUCLEOTIDE SEQUENCE [LARGE SCALE GENOMIC DNA]</scope>
    <source>
        <strain>B4264</strain>
    </source>
</reference>
<dbReference type="EC" id="2.4.2.7" evidence="1"/>
<dbReference type="EMBL" id="CP001176">
    <property type="protein sequence ID" value="ACK60030.1"/>
    <property type="molecule type" value="Genomic_DNA"/>
</dbReference>
<dbReference type="RefSeq" id="WP_000346215.1">
    <property type="nucleotide sequence ID" value="NZ_VEHB01000006.1"/>
</dbReference>
<dbReference type="SMR" id="B7HE42"/>
<dbReference type="KEGG" id="bcb:BCB4264_A4527"/>
<dbReference type="HOGENOM" id="CLU_063339_3_0_9"/>
<dbReference type="UniPathway" id="UPA00588">
    <property type="reaction ID" value="UER00646"/>
</dbReference>
<dbReference type="Proteomes" id="UP000007096">
    <property type="component" value="Chromosome"/>
</dbReference>
<dbReference type="GO" id="GO:0005737">
    <property type="term" value="C:cytoplasm"/>
    <property type="evidence" value="ECO:0007669"/>
    <property type="project" value="UniProtKB-SubCell"/>
</dbReference>
<dbReference type="GO" id="GO:0002055">
    <property type="term" value="F:adenine binding"/>
    <property type="evidence" value="ECO:0007669"/>
    <property type="project" value="TreeGrafter"/>
</dbReference>
<dbReference type="GO" id="GO:0003999">
    <property type="term" value="F:adenine phosphoribosyltransferase activity"/>
    <property type="evidence" value="ECO:0007669"/>
    <property type="project" value="UniProtKB-UniRule"/>
</dbReference>
<dbReference type="GO" id="GO:0016208">
    <property type="term" value="F:AMP binding"/>
    <property type="evidence" value="ECO:0007669"/>
    <property type="project" value="TreeGrafter"/>
</dbReference>
<dbReference type="GO" id="GO:0006168">
    <property type="term" value="P:adenine salvage"/>
    <property type="evidence" value="ECO:0007669"/>
    <property type="project" value="InterPro"/>
</dbReference>
<dbReference type="GO" id="GO:0044209">
    <property type="term" value="P:AMP salvage"/>
    <property type="evidence" value="ECO:0007669"/>
    <property type="project" value="UniProtKB-UniRule"/>
</dbReference>
<dbReference type="GO" id="GO:0006166">
    <property type="term" value="P:purine ribonucleoside salvage"/>
    <property type="evidence" value="ECO:0007669"/>
    <property type="project" value="UniProtKB-KW"/>
</dbReference>
<dbReference type="CDD" id="cd06223">
    <property type="entry name" value="PRTases_typeI"/>
    <property type="match status" value="1"/>
</dbReference>
<dbReference type="FunFam" id="3.40.50.2020:FF:000004">
    <property type="entry name" value="Adenine phosphoribosyltransferase"/>
    <property type="match status" value="1"/>
</dbReference>
<dbReference type="Gene3D" id="3.40.50.2020">
    <property type="match status" value="1"/>
</dbReference>
<dbReference type="HAMAP" id="MF_00004">
    <property type="entry name" value="Aden_phosphoribosyltr"/>
    <property type="match status" value="1"/>
</dbReference>
<dbReference type="InterPro" id="IPR005764">
    <property type="entry name" value="Ade_phspho_trans"/>
</dbReference>
<dbReference type="InterPro" id="IPR000836">
    <property type="entry name" value="PRibTrfase_dom"/>
</dbReference>
<dbReference type="InterPro" id="IPR029057">
    <property type="entry name" value="PRTase-like"/>
</dbReference>
<dbReference type="InterPro" id="IPR050054">
    <property type="entry name" value="UPRTase/APRTase"/>
</dbReference>
<dbReference type="NCBIfam" id="TIGR01090">
    <property type="entry name" value="apt"/>
    <property type="match status" value="1"/>
</dbReference>
<dbReference type="NCBIfam" id="NF002633">
    <property type="entry name" value="PRK02304.1-2"/>
    <property type="match status" value="1"/>
</dbReference>
<dbReference type="NCBIfam" id="NF002634">
    <property type="entry name" value="PRK02304.1-3"/>
    <property type="match status" value="1"/>
</dbReference>
<dbReference type="NCBIfam" id="NF002636">
    <property type="entry name" value="PRK02304.1-5"/>
    <property type="match status" value="1"/>
</dbReference>
<dbReference type="PANTHER" id="PTHR32315">
    <property type="entry name" value="ADENINE PHOSPHORIBOSYLTRANSFERASE"/>
    <property type="match status" value="1"/>
</dbReference>
<dbReference type="PANTHER" id="PTHR32315:SF3">
    <property type="entry name" value="ADENINE PHOSPHORIBOSYLTRANSFERASE"/>
    <property type="match status" value="1"/>
</dbReference>
<dbReference type="Pfam" id="PF00156">
    <property type="entry name" value="Pribosyltran"/>
    <property type="match status" value="1"/>
</dbReference>
<dbReference type="SUPFAM" id="SSF53271">
    <property type="entry name" value="PRTase-like"/>
    <property type="match status" value="1"/>
</dbReference>
<evidence type="ECO:0000255" key="1">
    <source>
        <dbReference type="HAMAP-Rule" id="MF_00004"/>
    </source>
</evidence>
<keyword id="KW-0963">Cytoplasm</keyword>
<keyword id="KW-0328">Glycosyltransferase</keyword>
<keyword id="KW-0660">Purine salvage</keyword>
<keyword id="KW-0808">Transferase</keyword>
<protein>
    <recommendedName>
        <fullName evidence="1">Adenine phosphoribosyltransferase</fullName>
        <shortName evidence="1">APRT</shortName>
        <ecNumber evidence="1">2.4.2.7</ecNumber>
    </recommendedName>
</protein>
<accession>B7HE42</accession>
<proteinExistence type="inferred from homology"/>
<organism>
    <name type="scientific">Bacillus cereus (strain B4264)</name>
    <dbReference type="NCBI Taxonomy" id="405532"/>
    <lineage>
        <taxon>Bacteria</taxon>
        <taxon>Bacillati</taxon>
        <taxon>Bacillota</taxon>
        <taxon>Bacilli</taxon>
        <taxon>Bacillales</taxon>
        <taxon>Bacillaceae</taxon>
        <taxon>Bacillus</taxon>
        <taxon>Bacillus cereus group</taxon>
    </lineage>
</organism>
<sequence>MDFKQHIAIVPDYPKEGIVFKDITPLMNDGKAYKAATDAIVEYAKERDIDVVVGPEARGFIIGCPVSYALEVGFAPVRKLGKLPREVITVDYGKEYGKDVLTIHKDAIKPGQRVLITDDLLATGGTIEATIKLVEELGGVVAGIAFLVELTYLDGRKMLDGYDVLVLEKY</sequence>
<name>APT_BACC4</name>
<comment type="function">
    <text evidence="1">Catalyzes a salvage reaction resulting in the formation of AMP, that is energically less costly than de novo synthesis.</text>
</comment>
<comment type="catalytic activity">
    <reaction evidence="1">
        <text>AMP + diphosphate = 5-phospho-alpha-D-ribose 1-diphosphate + adenine</text>
        <dbReference type="Rhea" id="RHEA:16609"/>
        <dbReference type="ChEBI" id="CHEBI:16708"/>
        <dbReference type="ChEBI" id="CHEBI:33019"/>
        <dbReference type="ChEBI" id="CHEBI:58017"/>
        <dbReference type="ChEBI" id="CHEBI:456215"/>
        <dbReference type="EC" id="2.4.2.7"/>
    </reaction>
</comment>
<comment type="pathway">
    <text evidence="1">Purine metabolism; AMP biosynthesis via salvage pathway; AMP from adenine: step 1/1.</text>
</comment>
<comment type="subunit">
    <text evidence="1">Homodimer.</text>
</comment>
<comment type="subcellular location">
    <subcellularLocation>
        <location evidence="1">Cytoplasm</location>
    </subcellularLocation>
</comment>
<comment type="similarity">
    <text evidence="1">Belongs to the purine/pyrimidine phosphoribosyltransferase family.</text>
</comment>